<comment type="function">
    <text evidence="1">Required for the expression of anaerobic nitric oxide (NO) reductase, acts as a transcriptional activator for at least the norVW operon. Activation also requires sigma-54.</text>
</comment>
<comment type="pathway">
    <text evidence="1">Nitrogen metabolism; nitric oxide reduction.</text>
</comment>
<dbReference type="EMBL" id="CP001396">
    <property type="protein sequence ID" value="ACR62878.1"/>
    <property type="molecule type" value="Genomic_DNA"/>
</dbReference>
<dbReference type="RefSeq" id="WP_000010749.1">
    <property type="nucleotide sequence ID" value="NC_012759.1"/>
</dbReference>
<dbReference type="SMR" id="C4ZYV4"/>
<dbReference type="KEGG" id="ebw:BWG_2445"/>
<dbReference type="HOGENOM" id="CLU_000445_125_0_6"/>
<dbReference type="UniPathway" id="UPA00638"/>
<dbReference type="GO" id="GO:0005524">
    <property type="term" value="F:ATP binding"/>
    <property type="evidence" value="ECO:0007669"/>
    <property type="project" value="UniProtKB-UniRule"/>
</dbReference>
<dbReference type="GO" id="GO:0016887">
    <property type="term" value="F:ATP hydrolysis activity"/>
    <property type="evidence" value="ECO:0007669"/>
    <property type="project" value="InterPro"/>
</dbReference>
<dbReference type="GO" id="GO:0003677">
    <property type="term" value="F:DNA binding"/>
    <property type="evidence" value="ECO:0007669"/>
    <property type="project" value="UniProtKB-KW"/>
</dbReference>
<dbReference type="GO" id="GO:0003700">
    <property type="term" value="F:DNA-binding transcription factor activity"/>
    <property type="evidence" value="ECO:0007669"/>
    <property type="project" value="UniProtKB-UniRule"/>
</dbReference>
<dbReference type="GO" id="GO:0000160">
    <property type="term" value="P:phosphorelay signal transduction system"/>
    <property type="evidence" value="ECO:0007669"/>
    <property type="project" value="UniProtKB-UniRule"/>
</dbReference>
<dbReference type="CDD" id="cd00009">
    <property type="entry name" value="AAA"/>
    <property type="match status" value="1"/>
</dbReference>
<dbReference type="FunFam" id="1.10.10.60:FF:000188">
    <property type="entry name" value="Anaerobic nitric oxide reductase transcription regulator NorR"/>
    <property type="match status" value="1"/>
</dbReference>
<dbReference type="FunFam" id="1.10.8.60:FF:000045">
    <property type="entry name" value="Anaerobic nitric oxide reductase transcription regulator NorR"/>
    <property type="match status" value="1"/>
</dbReference>
<dbReference type="FunFam" id="3.30.450.40:FF:000021">
    <property type="entry name" value="Anaerobic nitric oxide reductase transcription regulator NorR"/>
    <property type="match status" value="1"/>
</dbReference>
<dbReference type="FunFam" id="3.40.50.300:FF:000006">
    <property type="entry name" value="DNA-binding transcriptional regulator NtrC"/>
    <property type="match status" value="1"/>
</dbReference>
<dbReference type="Gene3D" id="1.10.8.60">
    <property type="match status" value="1"/>
</dbReference>
<dbReference type="Gene3D" id="3.30.450.40">
    <property type="match status" value="1"/>
</dbReference>
<dbReference type="Gene3D" id="1.10.10.60">
    <property type="entry name" value="Homeodomain-like"/>
    <property type="match status" value="1"/>
</dbReference>
<dbReference type="Gene3D" id="3.40.50.300">
    <property type="entry name" value="P-loop containing nucleotide triphosphate hydrolases"/>
    <property type="match status" value="1"/>
</dbReference>
<dbReference type="HAMAP" id="MF_01314">
    <property type="entry name" value="NorR"/>
    <property type="match status" value="1"/>
</dbReference>
<dbReference type="InterPro" id="IPR003593">
    <property type="entry name" value="AAA+_ATPase"/>
</dbReference>
<dbReference type="InterPro" id="IPR003018">
    <property type="entry name" value="GAF"/>
</dbReference>
<dbReference type="InterPro" id="IPR029016">
    <property type="entry name" value="GAF-like_dom_sf"/>
</dbReference>
<dbReference type="InterPro" id="IPR009057">
    <property type="entry name" value="Homeodomain-like_sf"/>
</dbReference>
<dbReference type="InterPro" id="IPR023944">
    <property type="entry name" value="NorR"/>
</dbReference>
<dbReference type="InterPro" id="IPR027417">
    <property type="entry name" value="P-loop_NTPase"/>
</dbReference>
<dbReference type="InterPro" id="IPR002078">
    <property type="entry name" value="Sigma_54_int"/>
</dbReference>
<dbReference type="InterPro" id="IPR025662">
    <property type="entry name" value="Sigma_54_int_dom_ATP-bd_1"/>
</dbReference>
<dbReference type="InterPro" id="IPR025943">
    <property type="entry name" value="Sigma_54_int_dom_ATP-bd_2"/>
</dbReference>
<dbReference type="InterPro" id="IPR025944">
    <property type="entry name" value="Sigma_54_int_dom_CS"/>
</dbReference>
<dbReference type="NCBIfam" id="NF003451">
    <property type="entry name" value="PRK05022.1"/>
    <property type="match status" value="1"/>
</dbReference>
<dbReference type="PANTHER" id="PTHR32071:SF35">
    <property type="entry name" value="ANAEROBIC NITRIC OXIDE REDUCTASE TRANSCRIPTION REGULATOR NORR"/>
    <property type="match status" value="1"/>
</dbReference>
<dbReference type="PANTHER" id="PTHR32071">
    <property type="entry name" value="TRANSCRIPTIONAL REGULATORY PROTEIN"/>
    <property type="match status" value="1"/>
</dbReference>
<dbReference type="Pfam" id="PF01590">
    <property type="entry name" value="GAF"/>
    <property type="match status" value="1"/>
</dbReference>
<dbReference type="Pfam" id="PF00158">
    <property type="entry name" value="Sigma54_activat"/>
    <property type="match status" value="1"/>
</dbReference>
<dbReference type="SMART" id="SM00382">
    <property type="entry name" value="AAA"/>
    <property type="match status" value="1"/>
</dbReference>
<dbReference type="SMART" id="SM00065">
    <property type="entry name" value="GAF"/>
    <property type="match status" value="1"/>
</dbReference>
<dbReference type="SUPFAM" id="SSF55781">
    <property type="entry name" value="GAF domain-like"/>
    <property type="match status" value="1"/>
</dbReference>
<dbReference type="SUPFAM" id="SSF46689">
    <property type="entry name" value="Homeodomain-like"/>
    <property type="match status" value="1"/>
</dbReference>
<dbReference type="SUPFAM" id="SSF52540">
    <property type="entry name" value="P-loop containing nucleoside triphosphate hydrolases"/>
    <property type="match status" value="1"/>
</dbReference>
<dbReference type="PROSITE" id="PS00675">
    <property type="entry name" value="SIGMA54_INTERACT_1"/>
    <property type="match status" value="1"/>
</dbReference>
<dbReference type="PROSITE" id="PS00676">
    <property type="entry name" value="SIGMA54_INTERACT_2"/>
    <property type="match status" value="1"/>
</dbReference>
<dbReference type="PROSITE" id="PS00688">
    <property type="entry name" value="SIGMA54_INTERACT_3"/>
    <property type="match status" value="1"/>
</dbReference>
<dbReference type="PROSITE" id="PS50045">
    <property type="entry name" value="SIGMA54_INTERACT_4"/>
    <property type="match status" value="1"/>
</dbReference>
<gene>
    <name evidence="1" type="primary">norR</name>
    <name type="ordered locus">BWG_2445</name>
</gene>
<keyword id="KW-0067">ATP-binding</keyword>
<keyword id="KW-0238">DNA-binding</keyword>
<keyword id="KW-0547">Nucleotide-binding</keyword>
<keyword id="KW-0597">Phosphoprotein</keyword>
<keyword id="KW-0804">Transcription</keyword>
<keyword id="KW-0805">Transcription regulation</keyword>
<name>NORR_ECOBW</name>
<reference key="1">
    <citation type="journal article" date="2009" name="J. Bacteriol.">
        <title>Genomic sequencing reveals regulatory mutations and recombinational events in the widely used MC4100 lineage of Escherichia coli K-12.</title>
        <authorList>
            <person name="Ferenci T."/>
            <person name="Zhou Z."/>
            <person name="Betteridge T."/>
            <person name="Ren Y."/>
            <person name="Liu Y."/>
            <person name="Feng L."/>
            <person name="Reeves P.R."/>
            <person name="Wang L."/>
        </authorList>
    </citation>
    <scope>NUCLEOTIDE SEQUENCE [LARGE SCALE GENOMIC DNA]</scope>
    <source>
        <strain>K12 / MC4100 / BW2952</strain>
    </source>
</reference>
<evidence type="ECO:0000255" key="1">
    <source>
        <dbReference type="HAMAP-Rule" id="MF_01314"/>
    </source>
</evidence>
<feature type="chain" id="PRO_1000214382" description="Anaerobic nitric oxide reductase transcription regulator NorR">
    <location>
        <begin position="1"/>
        <end position="504"/>
    </location>
</feature>
<feature type="domain" description="Sigma-54 factor interaction" evidence="1">
    <location>
        <begin position="187"/>
        <end position="416"/>
    </location>
</feature>
<feature type="DNA-binding region" description="H-T-H motif" evidence="1">
    <location>
        <begin position="479"/>
        <end position="498"/>
    </location>
</feature>
<feature type="binding site" evidence="1">
    <location>
        <begin position="215"/>
        <end position="222"/>
    </location>
    <ligand>
        <name>ATP</name>
        <dbReference type="ChEBI" id="CHEBI:30616"/>
    </ligand>
</feature>
<feature type="binding site" evidence="1">
    <location>
        <begin position="278"/>
        <end position="287"/>
    </location>
    <ligand>
        <name>ATP</name>
        <dbReference type="ChEBI" id="CHEBI:30616"/>
    </ligand>
</feature>
<feature type="modified residue" description="4-aspartylphosphate" evidence="1">
    <location>
        <position position="57"/>
    </location>
</feature>
<protein>
    <recommendedName>
        <fullName evidence="1">Anaerobic nitric oxide reductase transcription regulator NorR</fullName>
    </recommendedName>
</protein>
<organism>
    <name type="scientific">Escherichia coli (strain K12 / MC4100 / BW2952)</name>
    <dbReference type="NCBI Taxonomy" id="595496"/>
    <lineage>
        <taxon>Bacteria</taxon>
        <taxon>Pseudomonadati</taxon>
        <taxon>Pseudomonadota</taxon>
        <taxon>Gammaproteobacteria</taxon>
        <taxon>Enterobacterales</taxon>
        <taxon>Enterobacteriaceae</taxon>
        <taxon>Escherichia</taxon>
    </lineage>
</organism>
<sequence>MSFSVDVLANIAIELQRGIGHQDRFQRLITTLRQVLECDASALLRYDSRQFIPLAIDGLAKDVLGRRFALEGHPRLEAIARAGDVVRFPADSELPDPYDGLIPGQESLKVHACVGLPLFAGQNLIGALTLDGMQPDQFDVFSDEELRLIAALAAGALSNALLIEQLESQNMLPGDATPFEAVKQTQMIGLSPGMTQLKKEIEIVAASDLNVLISGETGTGKELVAKAIHEASPRAVNPLVYLNCAALPESVAESELFGHVKGAFTGAISNRSGKFEMADNGTLFLDEIGELSLALQAKLLRVLQYGDIQRVGDDRCLRVDVRVLAATNRDLREEVLAGRFRADLFHRLSVFPLSVPPLRERGDDVILLAGYFCEQCRLRQGLSRVVLSAGARNLLQHYSFPGNVRELEHAIHRAVVLARATRSGDEVILEAQHFAFPEVTLPTPEVAAVPVVKQNLREATEAFQRETIRQALAQNHHNWAACARMLETDVANLHRLAKRLGLKD</sequence>
<proteinExistence type="inferred from homology"/>
<accession>C4ZYV4</accession>